<gene>
    <name evidence="1" type="primary">mtnC</name>
    <name type="ordered locus">LBJ_2207</name>
</gene>
<keyword id="KW-0028">Amino-acid biosynthesis</keyword>
<keyword id="KW-0378">Hydrolase</keyword>
<keyword id="KW-0460">Magnesium</keyword>
<keyword id="KW-0479">Metal-binding</keyword>
<keyword id="KW-0486">Methionine biosynthesis</keyword>
<proteinExistence type="inferred from homology"/>
<evidence type="ECO:0000255" key="1">
    <source>
        <dbReference type="HAMAP-Rule" id="MF_01681"/>
    </source>
</evidence>
<evidence type="ECO:0000256" key="2">
    <source>
        <dbReference type="SAM" id="MobiDB-lite"/>
    </source>
</evidence>
<feature type="chain" id="PRO_0000357377" description="Enolase-phosphatase E1">
    <location>
        <begin position="1"/>
        <end position="231"/>
    </location>
</feature>
<feature type="region of interest" description="Disordered" evidence="2">
    <location>
        <begin position="206"/>
        <end position="231"/>
    </location>
</feature>
<protein>
    <recommendedName>
        <fullName evidence="1">Enolase-phosphatase E1</fullName>
        <ecNumber evidence="1">3.1.3.77</ecNumber>
    </recommendedName>
    <alternativeName>
        <fullName evidence="1">2,3-diketo-5-methylthio-1-phosphopentane phosphatase</fullName>
    </alternativeName>
</protein>
<dbReference type="EC" id="3.1.3.77" evidence="1"/>
<dbReference type="EMBL" id="CP000350">
    <property type="protein sequence ID" value="ABJ76690.1"/>
    <property type="molecule type" value="Genomic_DNA"/>
</dbReference>
<dbReference type="RefSeq" id="WP_011670637.1">
    <property type="nucleotide sequence ID" value="NC_008510.1"/>
</dbReference>
<dbReference type="SMR" id="Q04QY0"/>
<dbReference type="KEGG" id="lbj:LBJ_2207"/>
<dbReference type="HOGENOM" id="CLU_023273_0_0_12"/>
<dbReference type="UniPathway" id="UPA00904">
    <property type="reaction ID" value="UER00876"/>
</dbReference>
<dbReference type="UniPathway" id="UPA00904">
    <property type="reaction ID" value="UER00877"/>
</dbReference>
<dbReference type="Proteomes" id="UP000000656">
    <property type="component" value="Chromosome 1"/>
</dbReference>
<dbReference type="GO" id="GO:0043715">
    <property type="term" value="F:2,3-diketo-5-methylthiopentyl-1-phosphate enolase activity"/>
    <property type="evidence" value="ECO:0007669"/>
    <property type="project" value="UniProtKB-UniRule"/>
</dbReference>
<dbReference type="GO" id="GO:0043716">
    <property type="term" value="F:2-hydroxy-3-keto-5-methylthiopentenyl-1-phosphate phosphatase activity"/>
    <property type="evidence" value="ECO:0007669"/>
    <property type="project" value="UniProtKB-UniRule"/>
</dbReference>
<dbReference type="GO" id="GO:0043874">
    <property type="term" value="F:acireductone synthase activity"/>
    <property type="evidence" value="ECO:0007669"/>
    <property type="project" value="UniProtKB-EC"/>
</dbReference>
<dbReference type="GO" id="GO:0000287">
    <property type="term" value="F:magnesium ion binding"/>
    <property type="evidence" value="ECO:0007669"/>
    <property type="project" value="UniProtKB-UniRule"/>
</dbReference>
<dbReference type="GO" id="GO:0019509">
    <property type="term" value="P:L-methionine salvage from methylthioadenosine"/>
    <property type="evidence" value="ECO:0007669"/>
    <property type="project" value="UniProtKB-UniRule"/>
</dbReference>
<dbReference type="CDD" id="cd01629">
    <property type="entry name" value="HAD_EP"/>
    <property type="match status" value="1"/>
</dbReference>
<dbReference type="FunFam" id="3.40.50.1000:FF:000079">
    <property type="entry name" value="Enolase-phosphatase E1"/>
    <property type="match status" value="1"/>
</dbReference>
<dbReference type="Gene3D" id="1.10.720.60">
    <property type="match status" value="1"/>
</dbReference>
<dbReference type="Gene3D" id="3.40.50.1000">
    <property type="entry name" value="HAD superfamily/HAD-like"/>
    <property type="match status" value="1"/>
</dbReference>
<dbReference type="HAMAP" id="MF_01681">
    <property type="entry name" value="Salvage_MtnC"/>
    <property type="match status" value="1"/>
</dbReference>
<dbReference type="InterPro" id="IPR023943">
    <property type="entry name" value="Enolase-ppase_E1"/>
</dbReference>
<dbReference type="InterPro" id="IPR036412">
    <property type="entry name" value="HAD-like_sf"/>
</dbReference>
<dbReference type="InterPro" id="IPR006439">
    <property type="entry name" value="HAD-SF_hydro_IA"/>
</dbReference>
<dbReference type="InterPro" id="IPR023214">
    <property type="entry name" value="HAD_sf"/>
</dbReference>
<dbReference type="NCBIfam" id="TIGR01691">
    <property type="entry name" value="enolase-ppase"/>
    <property type="match status" value="1"/>
</dbReference>
<dbReference type="NCBIfam" id="TIGR01549">
    <property type="entry name" value="HAD-SF-IA-v1"/>
    <property type="match status" value="1"/>
</dbReference>
<dbReference type="PANTHER" id="PTHR20371">
    <property type="entry name" value="ENOLASE-PHOSPHATASE E1"/>
    <property type="match status" value="1"/>
</dbReference>
<dbReference type="PANTHER" id="PTHR20371:SF1">
    <property type="entry name" value="ENOLASE-PHOSPHATASE E1"/>
    <property type="match status" value="1"/>
</dbReference>
<dbReference type="Pfam" id="PF00702">
    <property type="entry name" value="Hydrolase"/>
    <property type="match status" value="1"/>
</dbReference>
<dbReference type="PRINTS" id="PR00413">
    <property type="entry name" value="HADHALOGNASE"/>
</dbReference>
<dbReference type="SFLD" id="SFLDF00044">
    <property type="entry name" value="enolase-phosphatase"/>
    <property type="match status" value="1"/>
</dbReference>
<dbReference type="SFLD" id="SFLDS00003">
    <property type="entry name" value="Haloacid_Dehalogenase"/>
    <property type="match status" value="1"/>
</dbReference>
<dbReference type="SUPFAM" id="SSF56784">
    <property type="entry name" value="HAD-like"/>
    <property type="match status" value="1"/>
</dbReference>
<comment type="function">
    <text evidence="1">Bifunctional enzyme that catalyzes the enolization of 2,3-diketo-5-methylthiopentyl-1-phosphate (DK-MTP-1-P) into the intermediate 2-hydroxy-3-keto-5-methylthiopentenyl-1-phosphate (HK-MTPenyl-1-P), which is then dephosphorylated to form the acireductone 1,2-dihydroxy-3-keto-5-methylthiopentene (DHK-MTPene).</text>
</comment>
<comment type="catalytic activity">
    <reaction evidence="1">
        <text>5-methylsulfanyl-2,3-dioxopentyl phosphate + H2O = 1,2-dihydroxy-5-(methylsulfanyl)pent-1-en-3-one + phosphate</text>
        <dbReference type="Rhea" id="RHEA:21700"/>
        <dbReference type="ChEBI" id="CHEBI:15377"/>
        <dbReference type="ChEBI" id="CHEBI:43474"/>
        <dbReference type="ChEBI" id="CHEBI:49252"/>
        <dbReference type="ChEBI" id="CHEBI:58828"/>
        <dbReference type="EC" id="3.1.3.77"/>
    </reaction>
</comment>
<comment type="cofactor">
    <cofactor evidence="1">
        <name>Mg(2+)</name>
        <dbReference type="ChEBI" id="CHEBI:18420"/>
    </cofactor>
    <text evidence="1">Binds 1 Mg(2+) ion per subunit.</text>
</comment>
<comment type="pathway">
    <text evidence="1">Amino-acid biosynthesis; L-methionine biosynthesis via salvage pathway; L-methionine from S-methyl-5-thio-alpha-D-ribose 1-phosphate: step 3/6.</text>
</comment>
<comment type="pathway">
    <text evidence="1">Amino-acid biosynthesis; L-methionine biosynthesis via salvage pathway; L-methionine from S-methyl-5-thio-alpha-D-ribose 1-phosphate: step 4/6.</text>
</comment>
<comment type="subunit">
    <text evidence="1">Monomer.</text>
</comment>
<comment type="similarity">
    <text evidence="1">Belongs to the HAD-like hydrolase superfamily. MasA/MtnC family.</text>
</comment>
<name>MTNC_LEPBJ</name>
<reference key="1">
    <citation type="journal article" date="2006" name="Proc. Natl. Acad. Sci. U.S.A.">
        <title>Genome reduction in Leptospira borgpetersenii reflects limited transmission potential.</title>
        <authorList>
            <person name="Bulach D.M."/>
            <person name="Zuerner R.L."/>
            <person name="Wilson P."/>
            <person name="Seemann T."/>
            <person name="McGrath A."/>
            <person name="Cullen P.A."/>
            <person name="Davis J."/>
            <person name="Johnson M."/>
            <person name="Kuczek E."/>
            <person name="Alt D.P."/>
            <person name="Peterson-Burch B."/>
            <person name="Coppel R.L."/>
            <person name="Rood J.I."/>
            <person name="Davies J.K."/>
            <person name="Adler B."/>
        </authorList>
    </citation>
    <scope>NUCLEOTIDE SEQUENCE [LARGE SCALE GENOMIC DNA]</scope>
    <source>
        <strain>JB197</strain>
    </source>
</reference>
<organism>
    <name type="scientific">Leptospira borgpetersenii serovar Hardjo-bovis (strain JB197)</name>
    <dbReference type="NCBI Taxonomy" id="355277"/>
    <lineage>
        <taxon>Bacteria</taxon>
        <taxon>Pseudomonadati</taxon>
        <taxon>Spirochaetota</taxon>
        <taxon>Spirochaetia</taxon>
        <taxon>Leptospirales</taxon>
        <taxon>Leptospiraceae</taxon>
        <taxon>Leptospira</taxon>
    </lineage>
</organism>
<sequence>MDFEIYLFDIEGTTTPIEFVHKILFPYSVGKFETFFRSNSLERKWIEKLLEEGKRDSTYSRQLTDSPQNLSDYCKYLVSVDRKSGPLKEIQGRIWKHGYENGELKSSLFADVPSFLKRIQSAKKKSAVYSSGSIEAQKLIFKYSDFGDLTEYFSAYFDTGVGGKRESASYSRIAEQLGIAPEKILFFTDIKEEADAARNAEFKTTLLERPGNAPQPKHSHPKISSFENFNP</sequence>
<accession>Q04QY0</accession>